<accession>Q65VG0</accession>
<protein>
    <recommendedName>
        <fullName evidence="1">Large ribosomal subunit protein bL19</fullName>
    </recommendedName>
    <alternativeName>
        <fullName evidence="2">50S ribosomal protein L19</fullName>
    </alternativeName>
</protein>
<keyword id="KW-0687">Ribonucleoprotein</keyword>
<keyword id="KW-0689">Ribosomal protein</keyword>
<organism>
    <name type="scientific">Mannheimia succiniciproducens (strain KCTC 0769BP / MBEL55E)</name>
    <dbReference type="NCBI Taxonomy" id="221988"/>
    <lineage>
        <taxon>Bacteria</taxon>
        <taxon>Pseudomonadati</taxon>
        <taxon>Pseudomonadota</taxon>
        <taxon>Gammaproteobacteria</taxon>
        <taxon>Pasteurellales</taxon>
        <taxon>Pasteurellaceae</taxon>
        <taxon>Basfia</taxon>
    </lineage>
</organism>
<proteinExistence type="inferred from homology"/>
<sequence length="116" mass="13072">MSNIIKQLEQEQLKQNIPSFRPGDTLEVKVWVVEGAKKRLQAFEGVVIAIRNRGLHSAFTLRKVSNGTGVERVFQTHSPAIDSISVKRKGAVRKAKLYYLRERSGKSARIKERLGA</sequence>
<gene>
    <name evidence="1" type="primary">rplS</name>
    <name type="ordered locus">MS0443</name>
</gene>
<dbReference type="EMBL" id="AE016827">
    <property type="protein sequence ID" value="AAU37050.1"/>
    <property type="molecule type" value="Genomic_DNA"/>
</dbReference>
<dbReference type="RefSeq" id="WP_011199625.1">
    <property type="nucleotide sequence ID" value="NC_006300.1"/>
</dbReference>
<dbReference type="SMR" id="Q65VG0"/>
<dbReference type="STRING" id="221988.MS0443"/>
<dbReference type="KEGG" id="msu:MS0443"/>
<dbReference type="eggNOG" id="COG0335">
    <property type="taxonomic scope" value="Bacteria"/>
</dbReference>
<dbReference type="HOGENOM" id="CLU_103507_2_2_6"/>
<dbReference type="OrthoDB" id="9803541at2"/>
<dbReference type="Proteomes" id="UP000000607">
    <property type="component" value="Chromosome"/>
</dbReference>
<dbReference type="GO" id="GO:0022625">
    <property type="term" value="C:cytosolic large ribosomal subunit"/>
    <property type="evidence" value="ECO:0007669"/>
    <property type="project" value="TreeGrafter"/>
</dbReference>
<dbReference type="GO" id="GO:0003735">
    <property type="term" value="F:structural constituent of ribosome"/>
    <property type="evidence" value="ECO:0007669"/>
    <property type="project" value="InterPro"/>
</dbReference>
<dbReference type="GO" id="GO:0006412">
    <property type="term" value="P:translation"/>
    <property type="evidence" value="ECO:0007669"/>
    <property type="project" value="UniProtKB-UniRule"/>
</dbReference>
<dbReference type="FunFam" id="2.30.30.790:FF:000001">
    <property type="entry name" value="50S ribosomal protein L19"/>
    <property type="match status" value="1"/>
</dbReference>
<dbReference type="Gene3D" id="2.30.30.790">
    <property type="match status" value="1"/>
</dbReference>
<dbReference type="HAMAP" id="MF_00402">
    <property type="entry name" value="Ribosomal_bL19"/>
    <property type="match status" value="1"/>
</dbReference>
<dbReference type="InterPro" id="IPR001857">
    <property type="entry name" value="Ribosomal_bL19"/>
</dbReference>
<dbReference type="InterPro" id="IPR018257">
    <property type="entry name" value="Ribosomal_bL19_CS"/>
</dbReference>
<dbReference type="InterPro" id="IPR038657">
    <property type="entry name" value="Ribosomal_bL19_sf"/>
</dbReference>
<dbReference type="InterPro" id="IPR008991">
    <property type="entry name" value="Translation_prot_SH3-like_sf"/>
</dbReference>
<dbReference type="NCBIfam" id="TIGR01024">
    <property type="entry name" value="rplS_bact"/>
    <property type="match status" value="1"/>
</dbReference>
<dbReference type="PANTHER" id="PTHR15680:SF9">
    <property type="entry name" value="LARGE RIBOSOMAL SUBUNIT PROTEIN BL19M"/>
    <property type="match status" value="1"/>
</dbReference>
<dbReference type="PANTHER" id="PTHR15680">
    <property type="entry name" value="RIBOSOMAL PROTEIN L19"/>
    <property type="match status" value="1"/>
</dbReference>
<dbReference type="Pfam" id="PF01245">
    <property type="entry name" value="Ribosomal_L19"/>
    <property type="match status" value="1"/>
</dbReference>
<dbReference type="PIRSF" id="PIRSF002191">
    <property type="entry name" value="Ribosomal_L19"/>
    <property type="match status" value="1"/>
</dbReference>
<dbReference type="PRINTS" id="PR00061">
    <property type="entry name" value="RIBOSOMALL19"/>
</dbReference>
<dbReference type="SUPFAM" id="SSF50104">
    <property type="entry name" value="Translation proteins SH3-like domain"/>
    <property type="match status" value="1"/>
</dbReference>
<dbReference type="PROSITE" id="PS01015">
    <property type="entry name" value="RIBOSOMAL_L19"/>
    <property type="match status" value="1"/>
</dbReference>
<name>RL19_MANSM</name>
<comment type="function">
    <text evidence="1">This protein is located at the 30S-50S ribosomal subunit interface and may play a role in the structure and function of the aminoacyl-tRNA binding site.</text>
</comment>
<comment type="similarity">
    <text evidence="1">Belongs to the bacterial ribosomal protein bL19 family.</text>
</comment>
<evidence type="ECO:0000255" key="1">
    <source>
        <dbReference type="HAMAP-Rule" id="MF_00402"/>
    </source>
</evidence>
<evidence type="ECO:0000305" key="2"/>
<feature type="chain" id="PRO_0000163480" description="Large ribosomal subunit protein bL19">
    <location>
        <begin position="1"/>
        <end position="116"/>
    </location>
</feature>
<reference key="1">
    <citation type="journal article" date="2004" name="Nat. Biotechnol.">
        <title>The genome sequence of the capnophilic rumen bacterium Mannheimia succiniciproducens.</title>
        <authorList>
            <person name="Hong S.H."/>
            <person name="Kim J.S."/>
            <person name="Lee S.Y."/>
            <person name="In Y.H."/>
            <person name="Choi S.S."/>
            <person name="Rih J.-K."/>
            <person name="Kim C.H."/>
            <person name="Jeong H."/>
            <person name="Hur C.G."/>
            <person name="Kim J.J."/>
        </authorList>
    </citation>
    <scope>NUCLEOTIDE SEQUENCE [LARGE SCALE GENOMIC DNA]</scope>
    <source>
        <strain>KCTC 0769BP / MBEL55E</strain>
    </source>
</reference>